<dbReference type="EC" id="2.5.1.47" evidence="2 3 4"/>
<dbReference type="EC" id="4.4.1.9" evidence="2 3"/>
<dbReference type="EMBL" id="D37963">
    <property type="protein sequence ID" value="BAA07177.1"/>
    <property type="molecule type" value="mRNA"/>
</dbReference>
<dbReference type="EMBL" id="AB426589">
    <property type="protein sequence ID" value="BAG72099.1"/>
    <property type="molecule type" value="Genomic_DNA"/>
</dbReference>
<dbReference type="PIR" id="A55450">
    <property type="entry name" value="A55450"/>
</dbReference>
<dbReference type="SMR" id="Q43153"/>
<dbReference type="IntAct" id="Q43153">
    <property type="interactions" value="1"/>
</dbReference>
<dbReference type="OrthoDB" id="10259545at2759"/>
<dbReference type="BRENDA" id="4.4.1.9">
    <property type="organism ID" value="5812"/>
</dbReference>
<dbReference type="SABIO-RK" id="Q43153"/>
<dbReference type="Proteomes" id="UP001155700">
    <property type="component" value="Unplaced"/>
</dbReference>
<dbReference type="GO" id="GO:0005737">
    <property type="term" value="C:cytoplasm"/>
    <property type="evidence" value="ECO:0000318"/>
    <property type="project" value="GO_Central"/>
</dbReference>
<dbReference type="GO" id="GO:0005739">
    <property type="term" value="C:mitochondrion"/>
    <property type="evidence" value="ECO:0007669"/>
    <property type="project" value="UniProtKB-SubCell"/>
</dbReference>
<dbReference type="GO" id="GO:0004124">
    <property type="term" value="F:cysteine synthase activity"/>
    <property type="evidence" value="ECO:0000314"/>
    <property type="project" value="UniProtKB"/>
</dbReference>
<dbReference type="GO" id="GO:0050017">
    <property type="term" value="F:L-3-cyanoalanine synthase activity"/>
    <property type="evidence" value="ECO:0000314"/>
    <property type="project" value="UniProtKB"/>
</dbReference>
<dbReference type="GO" id="GO:0019499">
    <property type="term" value="P:cyanide metabolic process"/>
    <property type="evidence" value="ECO:0000314"/>
    <property type="project" value="UniProtKB"/>
</dbReference>
<dbReference type="GO" id="GO:0006535">
    <property type="term" value="P:cysteine biosynthetic process from serine"/>
    <property type="evidence" value="ECO:0000318"/>
    <property type="project" value="GO_Central"/>
</dbReference>
<dbReference type="GO" id="GO:0006534">
    <property type="term" value="P:cysteine metabolic process"/>
    <property type="evidence" value="ECO:0000314"/>
    <property type="project" value="UniProtKB"/>
</dbReference>
<dbReference type="CDD" id="cd01561">
    <property type="entry name" value="CBS_like"/>
    <property type="match status" value="1"/>
</dbReference>
<dbReference type="FunFam" id="3.40.50.1100:FF:000002">
    <property type="entry name" value="Cysteine synthase"/>
    <property type="match status" value="1"/>
</dbReference>
<dbReference type="FunFam" id="3.40.50.1100:FF:000006">
    <property type="entry name" value="Cysteine synthase"/>
    <property type="match status" value="1"/>
</dbReference>
<dbReference type="Gene3D" id="3.40.50.1100">
    <property type="match status" value="2"/>
</dbReference>
<dbReference type="InterPro" id="IPR005856">
    <property type="entry name" value="Cys_synth"/>
</dbReference>
<dbReference type="InterPro" id="IPR050214">
    <property type="entry name" value="Cys_Synth/Cystath_Beta-Synth"/>
</dbReference>
<dbReference type="InterPro" id="IPR005859">
    <property type="entry name" value="CysK"/>
</dbReference>
<dbReference type="InterPro" id="IPR001216">
    <property type="entry name" value="P-phosphate_BS"/>
</dbReference>
<dbReference type="InterPro" id="IPR001926">
    <property type="entry name" value="TrpB-like_PALP"/>
</dbReference>
<dbReference type="InterPro" id="IPR036052">
    <property type="entry name" value="TrpB-like_PALP_sf"/>
</dbReference>
<dbReference type="NCBIfam" id="TIGR01139">
    <property type="entry name" value="cysK"/>
    <property type="match status" value="1"/>
</dbReference>
<dbReference type="NCBIfam" id="TIGR01136">
    <property type="entry name" value="cysKM"/>
    <property type="match status" value="1"/>
</dbReference>
<dbReference type="PANTHER" id="PTHR10314">
    <property type="entry name" value="CYSTATHIONINE BETA-SYNTHASE"/>
    <property type="match status" value="1"/>
</dbReference>
<dbReference type="Pfam" id="PF00291">
    <property type="entry name" value="PALP"/>
    <property type="match status" value="1"/>
</dbReference>
<dbReference type="SUPFAM" id="SSF53686">
    <property type="entry name" value="Tryptophan synthase beta subunit-like PLP-dependent enzymes"/>
    <property type="match status" value="1"/>
</dbReference>
<dbReference type="PROSITE" id="PS00901">
    <property type="entry name" value="CYS_SYNTHASE"/>
    <property type="match status" value="1"/>
</dbReference>
<gene>
    <name type="primary">CYSC</name>
    <name type="synonym">CAS</name>
    <name type="synonym">CSase C</name>
</gene>
<proteinExistence type="evidence at protein level"/>
<accession>Q43153</accession>
<reference key="1">
    <citation type="journal article" date="1994" name="J. Biol. Chem.">
        <title>Isolation and characterization of cDNA that encodes a putative mitochondrion-localizing isoform of cysteine synthase (O-acetylserine(thiol)-lyase) from Spinacia oleracea.</title>
        <authorList>
            <person name="Saito K."/>
            <person name="Tatsuguchi K."/>
            <person name="Takagi Y."/>
            <person name="Murakoshi I."/>
        </authorList>
    </citation>
    <scope>NUCLEOTIDE SEQUENCE [MRNA]</scope>
    <scope>FUNCTION</scope>
    <scope>CATALYTIC ACTIVITY</scope>
    <scope>TISSUE SPECIFICITY</scope>
</reference>
<reference key="2">
    <citation type="submission" date="2008-03" db="EMBL/GenBank/DDBJ databases">
        <title>Inhibition of cysteine synthase activity in the transgenic tobacco plants expressing a spinach cysteine synthase-like protein.</title>
        <authorList>
            <person name="Noda M."/>
            <person name="Nakamura M."/>
            <person name="Takamiya R."/>
            <person name="Tamura T."/>
            <person name="Ito T."/>
            <person name="Kodama H."/>
        </authorList>
    </citation>
    <scope>NUCLEOTIDE SEQUENCE [GENOMIC DNA]</scope>
</reference>
<reference key="3">
    <citation type="journal article" date="2000" name="J. Exp. Bot.">
        <title>Cysteine synthase (O-acetylserine (thiol) lyase) substrate specificities classify the mitochondrial isoform as a cyanoalanine synthase.</title>
        <authorList>
            <person name="Warrilow A.G."/>
            <person name="Hawkesford M.J."/>
        </authorList>
    </citation>
    <scope>PROTEIN SEQUENCE OF 28-39</scope>
    <scope>CATALYTIC ACTIVITY</scope>
    <scope>BIOPHYSICOCHEMICAL PROPERTIES</scope>
    <source>
        <strain>cv. Medina</strain>
    </source>
</reference>
<reference key="4">
    <citation type="journal article" date="2000" name="Plant Physiol.">
        <title>beta-Cyanoalanine synthase is a mitochondrial cysteine synthase-like protein in spinach and Arabidopsis.</title>
        <authorList>
            <person name="Hatzfeld Y."/>
            <person name="Maruyama A."/>
            <person name="Schmidt A."/>
            <person name="Noji M."/>
            <person name="Ishizawa K."/>
            <person name="Saito K."/>
        </authorList>
    </citation>
    <scope>FUNCTION</scope>
    <scope>CATALYTIC ACTIVITY</scope>
    <scope>BIOPHYSICOCHEMICAL PROPERTIES</scope>
</reference>
<keyword id="KW-0028">Amino-acid biosynthesis</keyword>
<keyword id="KW-0198">Cysteine biosynthesis</keyword>
<keyword id="KW-0903">Direct protein sequencing</keyword>
<keyword id="KW-0456">Lyase</keyword>
<keyword id="KW-0496">Mitochondrion</keyword>
<keyword id="KW-0663">Pyridoxal phosphate</keyword>
<keyword id="KW-1185">Reference proteome</keyword>
<keyword id="KW-0808">Transferase</keyword>
<keyword id="KW-0809">Transit peptide</keyword>
<evidence type="ECO:0000250" key="1"/>
<evidence type="ECO:0000269" key="2">
    <source>
    </source>
</evidence>
<evidence type="ECO:0000269" key="3">
    <source>
    </source>
</evidence>
<evidence type="ECO:0000269" key="4">
    <source>
    </source>
</evidence>
<evidence type="ECO:0000305" key="5"/>
<protein>
    <recommendedName>
        <fullName>Bifunctional L-3-cyanoalanine synthase/cysteine synthase, mitochondrial</fullName>
        <ecNumber evidence="2 3 4">2.5.1.47</ecNumber>
        <ecNumber evidence="2 3">4.4.1.9</ecNumber>
    </recommendedName>
    <alternativeName>
        <fullName>Beta-cyanoalanine synthase</fullName>
        <shortName>SoCAS</shortName>
    </alternativeName>
    <alternativeName>
        <fullName>Beta-substituted Ala synthase 3-1</fullName>
        <shortName>SPIol-Bsas3-1</shortName>
    </alternativeName>
    <alternativeName>
        <fullName>Cysteine synthase C</fullName>
    </alternativeName>
</protein>
<sequence length="368" mass="39510">MATVSSCLLRRSRTASRIFKTSLRCFSTTSSSAQTVSGSSPFPFTGTNIKTNVSQLIGRTPLVYLSKISEGSGAYIAVKQEMMQPTASVKDRPALAMIEDAEKKGLISPGKTVLIEPTSGNMGISMAFMAAMKGYKMVLTMPSYTSMERRVVMRAFGADLILTDPDKGMGGTVKKANQLLDSTPDGFMLQQFNNPANTQVHFETTGPEIWEDTQGKVDIFVMGIGSGGTVSGVGRYLKSQNPNVKIYGVEPAESNILNGGKPGPHLITGNGVGFKPEILDMDVMDAVLEVKSDDAVKMARQLALQEGLLVGISSGANTIAALDLAKRPENKGKLIVTIHPSFGERYLSSALFKELREEAENMQPVPVE</sequence>
<name>CYSC_SPIOL</name>
<feature type="transit peptide" description="Mitochondrion" evidence="3">
    <location>
        <begin position="1"/>
        <end position="27"/>
    </location>
</feature>
<feature type="chain" id="PRO_0000418636" description="Bifunctional L-3-cyanoalanine synthase/cysteine synthase, mitochondrial">
    <location>
        <begin position="28"/>
        <end position="368"/>
    </location>
</feature>
<feature type="binding site" evidence="1">
    <location>
        <position position="121"/>
    </location>
    <ligand>
        <name>pyridoxal 5'-phosphate</name>
        <dbReference type="ChEBI" id="CHEBI:597326"/>
    </ligand>
</feature>
<feature type="binding site" evidence="1">
    <location>
        <begin position="225"/>
        <end position="229"/>
    </location>
    <ligand>
        <name>pyridoxal 5'-phosphate</name>
        <dbReference type="ChEBI" id="CHEBI:597326"/>
    </ligand>
</feature>
<feature type="binding site" evidence="1">
    <location>
        <position position="313"/>
    </location>
    <ligand>
        <name>pyridoxal 5'-phosphate</name>
        <dbReference type="ChEBI" id="CHEBI:597326"/>
    </ligand>
</feature>
<feature type="modified residue" description="N6-(pyridoxal phosphate)lysine" evidence="1">
    <location>
        <position position="90"/>
    </location>
</feature>
<organism>
    <name type="scientific">Spinacia oleracea</name>
    <name type="common">Spinach</name>
    <dbReference type="NCBI Taxonomy" id="3562"/>
    <lineage>
        <taxon>Eukaryota</taxon>
        <taxon>Viridiplantae</taxon>
        <taxon>Streptophyta</taxon>
        <taxon>Embryophyta</taxon>
        <taxon>Tracheophyta</taxon>
        <taxon>Spermatophyta</taxon>
        <taxon>Magnoliopsida</taxon>
        <taxon>eudicotyledons</taxon>
        <taxon>Gunneridae</taxon>
        <taxon>Pentapetalae</taxon>
        <taxon>Caryophyllales</taxon>
        <taxon>Chenopodiaceae</taxon>
        <taxon>Chenopodioideae</taxon>
        <taxon>Anserineae</taxon>
        <taxon>Spinacia</taxon>
    </lineage>
</organism>
<comment type="function">
    <text evidence="2 4">The cyanoalanine synthesis reaction is more efficient than the cysteine synthase activity. Probably involved in the detoxification of cyanide that arises from ethylene biosynthesis.</text>
</comment>
<comment type="catalytic activity">
    <reaction evidence="2 3 4">
        <text>O-acetyl-L-serine + hydrogen sulfide = L-cysteine + acetate</text>
        <dbReference type="Rhea" id="RHEA:14829"/>
        <dbReference type="ChEBI" id="CHEBI:29919"/>
        <dbReference type="ChEBI" id="CHEBI:30089"/>
        <dbReference type="ChEBI" id="CHEBI:35235"/>
        <dbReference type="ChEBI" id="CHEBI:58340"/>
        <dbReference type="EC" id="2.5.1.47"/>
    </reaction>
</comment>
<comment type="catalytic activity">
    <reaction evidence="2 3">
        <text>hydrogen cyanide + L-cysteine = 3-cyano-L-alanine + hydrogen sulfide + H(+)</text>
        <dbReference type="Rhea" id="RHEA:17821"/>
        <dbReference type="ChEBI" id="CHEBI:15378"/>
        <dbReference type="ChEBI" id="CHEBI:18407"/>
        <dbReference type="ChEBI" id="CHEBI:29919"/>
        <dbReference type="ChEBI" id="CHEBI:35235"/>
        <dbReference type="ChEBI" id="CHEBI:77860"/>
        <dbReference type="EC" id="4.4.1.9"/>
    </reaction>
</comment>
<comment type="cofactor">
    <cofactor evidence="5">
        <name>pyridoxal 5'-phosphate</name>
        <dbReference type="ChEBI" id="CHEBI:597326"/>
    </cofactor>
</comment>
<comment type="biophysicochemical properties">
    <kinetics>
        <KM evidence="2 3">14.48 mM for O(3)-acetyl-L-serine for the cysteine synthase activity with the recombinant enzyme</KM>
        <KM evidence="2 3">3.57 mM for Na(2)S for the cysteine synthase activity with the recombinant enzyme</KM>
        <KM evidence="2 3">2.14 mM for L-cysteine for the L-3-cyanoalanine synthase activity with the recombinant enzyme</KM>
        <KM evidence="2 3">0.1 mM for KCN for the L-3-cyanoalanine synthase activity with the recombinant enzyme</KM>
        <KM evidence="2 3">0.409 mM for L-cysteine for the L-3-cyanoalanine synthase activity with the native enzyme</KM>
        <KM evidence="2 3">9.728 mM for O(3)-acetyl-L-serine for the cysteine synthase activity with the native enzyme</KM>
        <KM evidence="2 3">0.595 mM for chloroalanine for the cysteine synthase activity with the native enzyme (at pH 8.0)</KM>
        <KM evidence="2 3">0.464 mM for chloroalanine for the cysteine synthase activity with the native enzyme (at pH 9.8)</KM>
    </kinetics>
    <phDependence>
        <text evidence="2 3">Optimum pH is 10.0.</text>
    </phDependence>
</comment>
<comment type="subcellular location">
    <subcellularLocation>
        <location evidence="5">Mitochondrion</location>
    </subcellularLocation>
</comment>
<comment type="tissue specificity">
    <text evidence="4">Expressed in green and etiolated seedlings.</text>
</comment>
<comment type="similarity">
    <text evidence="5">Belongs to the cysteine synthase/cystathionine beta-synthase family.</text>
</comment>